<reference evidence="5" key="1">
    <citation type="journal article" date="2006" name="Biochem. J.">
        <title>A novel suite of cyclotides from Viola odorata: sequence variation and the implications for structure, function and stability.</title>
        <authorList>
            <person name="Ireland D.C."/>
            <person name="Colgrave M.L."/>
            <person name="Craik D.J."/>
        </authorList>
    </citation>
    <scope>PROTEIN SEQUENCE</scope>
    <scope>MASS SPECTROMETRY</scope>
</reference>
<reference key="2">
    <citation type="journal article" date="2017" name="J. Nat. Prod.">
        <title>Cyclotides from the Indian Medicinal Plant Viola odorata (Banafsha): Identification and Characterization.</title>
        <authorList>
            <person name="Narayani M."/>
            <person name="Chadha A."/>
            <person name="Srivastava S."/>
        </authorList>
    </citation>
    <scope>TISSUE SPECIFICITY</scope>
    <scope>IDENTIFICATION BY MASS SPECTROMETRY</scope>
</reference>
<comment type="function">
    <text evidence="5">Probably participates in a plant defense mechanism.</text>
</comment>
<comment type="tissue specificity">
    <text evidence="4">Expressed in roots and runners but not in leaves, petals and petioles (at protein level).</text>
</comment>
<comment type="domain">
    <text evidence="1">The presence of a 'disulfide through disulfide knot' structurally defines this protein as a knottin.</text>
</comment>
<comment type="PTM">
    <text evidence="2 3">This is a cyclic peptide.</text>
</comment>
<comment type="mass spectrometry" mass="2904.2" method="MALDI" evidence="3"/>
<comment type="similarity">
    <text evidence="2">Belongs to the cyclotide family. Moebius subfamily.</text>
</comment>
<comment type="caution">
    <text evidence="3">This peptide is cyclic. The start position was chosen by similarity to OAK1 (kalata-B1) for which the DNA sequence is known.</text>
</comment>
<proteinExistence type="evidence at protein level"/>
<sequence length="29" mass="2930">GLPICGETCVGGTCNTPGCTCSWPVCTRN</sequence>
<organism>
    <name type="scientific">Viola odorata</name>
    <name type="common">Sweet violet</name>
    <dbReference type="NCBI Taxonomy" id="97441"/>
    <lineage>
        <taxon>Eukaryota</taxon>
        <taxon>Viridiplantae</taxon>
        <taxon>Streptophyta</taxon>
        <taxon>Embryophyta</taxon>
        <taxon>Tracheophyta</taxon>
        <taxon>Spermatophyta</taxon>
        <taxon>Magnoliopsida</taxon>
        <taxon>eudicotyledons</taxon>
        <taxon>Gunneridae</taxon>
        <taxon>Pentapetalae</taxon>
        <taxon>rosids</taxon>
        <taxon>fabids</taxon>
        <taxon>Malpighiales</taxon>
        <taxon>Violaceae</taxon>
        <taxon>Viola</taxon>
        <taxon>Viola subgen. Viola</taxon>
        <taxon>Viola sect. Viola</taxon>
        <taxon>Viola subsect. Viola</taxon>
    </lineage>
</organism>
<name>CYO22_VIOOD</name>
<keyword id="KW-0903">Direct protein sequencing</keyword>
<keyword id="KW-1015">Disulfide bond</keyword>
<keyword id="KW-0960">Knottin</keyword>
<keyword id="KW-0611">Plant defense</keyword>
<evidence type="ECO:0000250" key="1">
    <source>
        <dbReference type="UniProtKB" id="P83835"/>
    </source>
</evidence>
<evidence type="ECO:0000255" key="2">
    <source>
        <dbReference type="PROSITE-ProRule" id="PRU00395"/>
    </source>
</evidence>
<evidence type="ECO:0000269" key="3">
    <source>
    </source>
</evidence>
<evidence type="ECO:0000269" key="4">
    <source>
    </source>
</evidence>
<evidence type="ECO:0000305" key="5"/>
<feature type="peptide" id="PRO_0000294951" description="Cycloviolacin-O22" evidence="2 3">
    <location>
        <begin position="1"/>
        <end position="29"/>
    </location>
</feature>
<feature type="disulfide bond" evidence="1 2">
    <location>
        <begin position="5"/>
        <end position="19"/>
    </location>
</feature>
<feature type="disulfide bond" evidence="1 2">
    <location>
        <begin position="9"/>
        <end position="21"/>
    </location>
</feature>
<feature type="disulfide bond" evidence="1 2">
    <location>
        <begin position="14"/>
        <end position="26"/>
    </location>
</feature>
<feature type="cross-link" description="Cyclopeptide (Gly-Asn)" evidence="3">
    <location>
        <begin position="1"/>
        <end position="29"/>
    </location>
</feature>
<protein>
    <recommendedName>
        <fullName>Cycloviolacin-O22</fullName>
    </recommendedName>
</protein>
<accession>P85185</accession>
<dbReference type="BMRB" id="P85185"/>
<dbReference type="SMR" id="P85185"/>
<dbReference type="GO" id="GO:0006952">
    <property type="term" value="P:defense response"/>
    <property type="evidence" value="ECO:0007669"/>
    <property type="project" value="UniProtKB-KW"/>
</dbReference>
<dbReference type="InterPro" id="IPR005535">
    <property type="entry name" value="Cyclotide"/>
</dbReference>
<dbReference type="InterPro" id="IPR012324">
    <property type="entry name" value="Cyclotide_moebius_CS"/>
</dbReference>
<dbReference type="InterPro" id="IPR036146">
    <property type="entry name" value="Cyclotide_sf"/>
</dbReference>
<dbReference type="Pfam" id="PF03784">
    <property type="entry name" value="Cyclotide"/>
    <property type="match status" value="1"/>
</dbReference>
<dbReference type="PIRSF" id="PIRSF037891">
    <property type="entry name" value="Cycloviolacin"/>
    <property type="match status" value="1"/>
</dbReference>
<dbReference type="SUPFAM" id="SSF57038">
    <property type="entry name" value="Cyclotides"/>
    <property type="match status" value="1"/>
</dbReference>
<dbReference type="PROSITE" id="PS51052">
    <property type="entry name" value="CYCLOTIDE"/>
    <property type="match status" value="1"/>
</dbReference>
<dbReference type="PROSITE" id="PS60009">
    <property type="entry name" value="CYCLOTIDE_MOEBIUS"/>
    <property type="match status" value="1"/>
</dbReference>